<gene>
    <name evidence="1" type="primary">lspA</name>
    <name type="ordered locus">BMEI1799</name>
</gene>
<sequence length="160" mass="18230">MKRHAVWSSLFVVILAVLIDQGIKYLVESRMFYGQQIDLLPFLALFRTHNEGIAFSMLAWLHDGGLIAITLAVIAFVLYLWWTNAPERVFARYGFALVIGGAIGNLIDRVMHGYVVDYVLFHLPTWSFAVFNLADAFITIGAGLIILEEFLGWRRERISH</sequence>
<keyword id="KW-0064">Aspartyl protease</keyword>
<keyword id="KW-0997">Cell inner membrane</keyword>
<keyword id="KW-1003">Cell membrane</keyword>
<keyword id="KW-0378">Hydrolase</keyword>
<keyword id="KW-0472">Membrane</keyword>
<keyword id="KW-0645">Protease</keyword>
<keyword id="KW-0812">Transmembrane</keyword>
<keyword id="KW-1133">Transmembrane helix</keyword>
<proteinExistence type="inferred from homology"/>
<reference key="1">
    <citation type="journal article" date="2002" name="Proc. Natl. Acad. Sci. U.S.A.">
        <title>The genome sequence of the facultative intracellular pathogen Brucella melitensis.</title>
        <authorList>
            <person name="DelVecchio V.G."/>
            <person name="Kapatral V."/>
            <person name="Redkar R.J."/>
            <person name="Patra G."/>
            <person name="Mujer C."/>
            <person name="Los T."/>
            <person name="Ivanova N."/>
            <person name="Anderson I."/>
            <person name="Bhattacharyya A."/>
            <person name="Lykidis A."/>
            <person name="Reznik G."/>
            <person name="Jablonski L."/>
            <person name="Larsen N."/>
            <person name="D'Souza M."/>
            <person name="Bernal A."/>
            <person name="Mazur M."/>
            <person name="Goltsman E."/>
            <person name="Selkov E."/>
            <person name="Elzer P.H."/>
            <person name="Hagius S."/>
            <person name="O'Callaghan D."/>
            <person name="Letesson J.-J."/>
            <person name="Haselkorn R."/>
            <person name="Kyrpides N.C."/>
            <person name="Overbeek R."/>
        </authorList>
    </citation>
    <scope>NUCLEOTIDE SEQUENCE [LARGE SCALE GENOMIC DNA]</scope>
    <source>
        <strain>ATCC 23456 / CCUG 17765 / NCTC 10094 / 16M</strain>
    </source>
</reference>
<name>LSPA_BRUME</name>
<feature type="chain" id="PRO_0000289359" description="Lipoprotein signal peptidase">
    <location>
        <begin position="1"/>
        <end position="160"/>
    </location>
</feature>
<feature type="transmembrane region" description="Helical" evidence="1">
    <location>
        <begin position="6"/>
        <end position="26"/>
    </location>
</feature>
<feature type="transmembrane region" description="Helical" evidence="1">
    <location>
        <begin position="58"/>
        <end position="78"/>
    </location>
</feature>
<feature type="transmembrane region" description="Helical" evidence="1">
    <location>
        <begin position="95"/>
        <end position="115"/>
    </location>
</feature>
<feature type="transmembrane region" description="Helical" evidence="1">
    <location>
        <begin position="127"/>
        <end position="147"/>
    </location>
</feature>
<feature type="active site" evidence="1">
    <location>
        <position position="117"/>
    </location>
</feature>
<feature type="active site" evidence="1">
    <location>
        <position position="135"/>
    </location>
</feature>
<evidence type="ECO:0000255" key="1">
    <source>
        <dbReference type="HAMAP-Rule" id="MF_00161"/>
    </source>
</evidence>
<protein>
    <recommendedName>
        <fullName evidence="1">Lipoprotein signal peptidase</fullName>
        <ecNumber evidence="1">3.4.23.36</ecNumber>
    </recommendedName>
    <alternativeName>
        <fullName evidence="1">Prolipoprotein signal peptidase</fullName>
    </alternativeName>
    <alternativeName>
        <fullName evidence="1">Signal peptidase II</fullName>
        <shortName evidence="1">SPase II</shortName>
    </alternativeName>
</protein>
<accession>Q8YES8</accession>
<dbReference type="EC" id="3.4.23.36" evidence="1"/>
<dbReference type="EMBL" id="AE008917">
    <property type="protein sequence ID" value="AAL52980.1"/>
    <property type="molecule type" value="Genomic_DNA"/>
</dbReference>
<dbReference type="PIR" id="AI3476">
    <property type="entry name" value="AI3476"/>
</dbReference>
<dbReference type="RefSeq" id="WP_002965397.1">
    <property type="nucleotide sequence ID" value="NZ_GG703778.1"/>
</dbReference>
<dbReference type="SMR" id="Q8YES8"/>
<dbReference type="GeneID" id="97534439"/>
<dbReference type="KEGG" id="bme:BMEI1799"/>
<dbReference type="KEGG" id="bmel:DK63_1688"/>
<dbReference type="PATRIC" id="fig|224914.52.peg.1783"/>
<dbReference type="eggNOG" id="COG0597">
    <property type="taxonomic scope" value="Bacteria"/>
</dbReference>
<dbReference type="PhylomeDB" id="Q8YES8"/>
<dbReference type="UniPathway" id="UPA00665"/>
<dbReference type="Proteomes" id="UP000000419">
    <property type="component" value="Chromosome I"/>
</dbReference>
<dbReference type="GO" id="GO:0005886">
    <property type="term" value="C:plasma membrane"/>
    <property type="evidence" value="ECO:0007669"/>
    <property type="project" value="UniProtKB-SubCell"/>
</dbReference>
<dbReference type="GO" id="GO:0004190">
    <property type="term" value="F:aspartic-type endopeptidase activity"/>
    <property type="evidence" value="ECO:0007669"/>
    <property type="project" value="UniProtKB-UniRule"/>
</dbReference>
<dbReference type="GO" id="GO:0006508">
    <property type="term" value="P:proteolysis"/>
    <property type="evidence" value="ECO:0007669"/>
    <property type="project" value="UniProtKB-KW"/>
</dbReference>
<dbReference type="HAMAP" id="MF_00161">
    <property type="entry name" value="LspA"/>
    <property type="match status" value="1"/>
</dbReference>
<dbReference type="InterPro" id="IPR001872">
    <property type="entry name" value="Peptidase_A8"/>
</dbReference>
<dbReference type="NCBIfam" id="TIGR00077">
    <property type="entry name" value="lspA"/>
    <property type="match status" value="1"/>
</dbReference>
<dbReference type="PANTHER" id="PTHR33695">
    <property type="entry name" value="LIPOPROTEIN SIGNAL PEPTIDASE"/>
    <property type="match status" value="1"/>
</dbReference>
<dbReference type="PANTHER" id="PTHR33695:SF1">
    <property type="entry name" value="LIPOPROTEIN SIGNAL PEPTIDASE"/>
    <property type="match status" value="1"/>
</dbReference>
<dbReference type="Pfam" id="PF01252">
    <property type="entry name" value="Peptidase_A8"/>
    <property type="match status" value="1"/>
</dbReference>
<dbReference type="PRINTS" id="PR00781">
    <property type="entry name" value="LIPOSIGPTASE"/>
</dbReference>
<dbReference type="PROSITE" id="PS00855">
    <property type="entry name" value="SPASE_II"/>
    <property type="match status" value="1"/>
</dbReference>
<organism>
    <name type="scientific">Brucella melitensis biotype 1 (strain ATCC 23456 / CCUG 17765 / NCTC 10094 / 16M)</name>
    <dbReference type="NCBI Taxonomy" id="224914"/>
    <lineage>
        <taxon>Bacteria</taxon>
        <taxon>Pseudomonadati</taxon>
        <taxon>Pseudomonadota</taxon>
        <taxon>Alphaproteobacteria</taxon>
        <taxon>Hyphomicrobiales</taxon>
        <taxon>Brucellaceae</taxon>
        <taxon>Brucella/Ochrobactrum group</taxon>
        <taxon>Brucella</taxon>
    </lineage>
</organism>
<comment type="function">
    <text evidence="1">This protein specifically catalyzes the removal of signal peptides from prolipoproteins.</text>
</comment>
<comment type="catalytic activity">
    <reaction evidence="1">
        <text>Release of signal peptides from bacterial membrane prolipoproteins. Hydrolyzes -Xaa-Yaa-Zaa-|-(S,diacylglyceryl)Cys-, in which Xaa is hydrophobic (preferably Leu), and Yaa (Ala or Ser) and Zaa (Gly or Ala) have small, neutral side chains.</text>
        <dbReference type="EC" id="3.4.23.36"/>
    </reaction>
</comment>
<comment type="pathway">
    <text evidence="1">Protein modification; lipoprotein biosynthesis (signal peptide cleavage).</text>
</comment>
<comment type="subcellular location">
    <subcellularLocation>
        <location evidence="1">Cell inner membrane</location>
        <topology evidence="1">Multi-pass membrane protein</topology>
    </subcellularLocation>
</comment>
<comment type="similarity">
    <text evidence="1">Belongs to the peptidase A8 family.</text>
</comment>